<accession>Q64XW5</accession>
<proteinExistence type="inferred from homology"/>
<keyword id="KW-0963">Cytoplasm</keyword>
<keyword id="KW-0488">Methylation</keyword>
<keyword id="KW-0648">Protein biosynthesis</keyword>
<evidence type="ECO:0000255" key="1">
    <source>
        <dbReference type="HAMAP-Rule" id="MF_00093"/>
    </source>
</evidence>
<protein>
    <recommendedName>
        <fullName evidence="1">Peptide chain release factor 1</fullName>
        <shortName evidence="1">RF-1</shortName>
    </recommendedName>
</protein>
<dbReference type="EMBL" id="AP006841">
    <property type="protein sequence ID" value="BAD47661.1"/>
    <property type="molecule type" value="Genomic_DNA"/>
</dbReference>
<dbReference type="RefSeq" id="WP_005785133.1">
    <property type="nucleotide sequence ID" value="NC_006347.1"/>
</dbReference>
<dbReference type="RefSeq" id="YP_098195.1">
    <property type="nucleotide sequence ID" value="NC_006347.1"/>
</dbReference>
<dbReference type="SMR" id="Q64XW5"/>
<dbReference type="STRING" id="295405.BF0910"/>
<dbReference type="GeneID" id="60369497"/>
<dbReference type="KEGG" id="bfr:BF0910"/>
<dbReference type="PATRIC" id="fig|295405.11.peg.913"/>
<dbReference type="HOGENOM" id="CLU_036856_0_1_10"/>
<dbReference type="OrthoDB" id="9806673at2"/>
<dbReference type="Proteomes" id="UP000002197">
    <property type="component" value="Chromosome"/>
</dbReference>
<dbReference type="GO" id="GO:0005737">
    <property type="term" value="C:cytoplasm"/>
    <property type="evidence" value="ECO:0007669"/>
    <property type="project" value="UniProtKB-SubCell"/>
</dbReference>
<dbReference type="GO" id="GO:0016149">
    <property type="term" value="F:translation release factor activity, codon specific"/>
    <property type="evidence" value="ECO:0007669"/>
    <property type="project" value="UniProtKB-UniRule"/>
</dbReference>
<dbReference type="FunFam" id="3.30.70.1660:FF:000002">
    <property type="entry name" value="Peptide chain release factor 1"/>
    <property type="match status" value="1"/>
</dbReference>
<dbReference type="FunFam" id="3.30.70.1660:FF:000010">
    <property type="entry name" value="Peptide chain release factor 1"/>
    <property type="match status" value="1"/>
</dbReference>
<dbReference type="FunFam" id="3.30.160.20:FF:000040">
    <property type="entry name" value="Peptide chain release factor 2"/>
    <property type="match status" value="1"/>
</dbReference>
<dbReference type="Gene3D" id="3.30.160.20">
    <property type="match status" value="1"/>
</dbReference>
<dbReference type="Gene3D" id="3.30.70.1660">
    <property type="match status" value="1"/>
</dbReference>
<dbReference type="Gene3D" id="6.10.140.1950">
    <property type="match status" value="1"/>
</dbReference>
<dbReference type="HAMAP" id="MF_00093">
    <property type="entry name" value="Rel_fac_1"/>
    <property type="match status" value="1"/>
</dbReference>
<dbReference type="InterPro" id="IPR005139">
    <property type="entry name" value="PCRF"/>
</dbReference>
<dbReference type="InterPro" id="IPR000352">
    <property type="entry name" value="Pep_chain_release_fac_I"/>
</dbReference>
<dbReference type="InterPro" id="IPR045853">
    <property type="entry name" value="Pep_chain_release_fac_I_sf"/>
</dbReference>
<dbReference type="InterPro" id="IPR050057">
    <property type="entry name" value="Prokaryotic/Mito_RF"/>
</dbReference>
<dbReference type="InterPro" id="IPR004373">
    <property type="entry name" value="RF-1"/>
</dbReference>
<dbReference type="NCBIfam" id="TIGR00019">
    <property type="entry name" value="prfA"/>
    <property type="match status" value="1"/>
</dbReference>
<dbReference type="NCBIfam" id="NF001859">
    <property type="entry name" value="PRK00591.1"/>
    <property type="match status" value="1"/>
</dbReference>
<dbReference type="PANTHER" id="PTHR43804">
    <property type="entry name" value="LD18447P"/>
    <property type="match status" value="1"/>
</dbReference>
<dbReference type="PANTHER" id="PTHR43804:SF7">
    <property type="entry name" value="LD18447P"/>
    <property type="match status" value="1"/>
</dbReference>
<dbReference type="Pfam" id="PF03462">
    <property type="entry name" value="PCRF"/>
    <property type="match status" value="1"/>
</dbReference>
<dbReference type="Pfam" id="PF00472">
    <property type="entry name" value="RF-1"/>
    <property type="match status" value="1"/>
</dbReference>
<dbReference type="SMART" id="SM00937">
    <property type="entry name" value="PCRF"/>
    <property type="match status" value="1"/>
</dbReference>
<dbReference type="SUPFAM" id="SSF75620">
    <property type="entry name" value="Release factor"/>
    <property type="match status" value="1"/>
</dbReference>
<dbReference type="PROSITE" id="PS00745">
    <property type="entry name" value="RF_PROK_I"/>
    <property type="match status" value="1"/>
</dbReference>
<reference key="1">
    <citation type="journal article" date="2004" name="Proc. Natl. Acad. Sci. U.S.A.">
        <title>Genomic analysis of Bacteroides fragilis reveals extensive DNA inversions regulating cell surface adaptation.</title>
        <authorList>
            <person name="Kuwahara T."/>
            <person name="Yamashita A."/>
            <person name="Hirakawa H."/>
            <person name="Nakayama H."/>
            <person name="Toh H."/>
            <person name="Okada N."/>
            <person name="Kuhara S."/>
            <person name="Hattori M."/>
            <person name="Hayashi T."/>
            <person name="Ohnishi Y."/>
        </authorList>
    </citation>
    <scope>NUCLEOTIDE SEQUENCE [LARGE SCALE GENOMIC DNA]</scope>
    <source>
        <strain>YCH46</strain>
    </source>
</reference>
<feature type="chain" id="PRO_0000177629" description="Peptide chain release factor 1">
    <location>
        <begin position="1"/>
        <end position="370"/>
    </location>
</feature>
<feature type="modified residue" description="N5-methylglutamine" evidence="1">
    <location>
        <position position="239"/>
    </location>
</feature>
<name>RF1_BACFR</name>
<comment type="function">
    <text evidence="1">Peptide chain release factor 1 directs the termination of translation in response to the peptide chain termination codons UAG and UAA.</text>
</comment>
<comment type="subcellular location">
    <subcellularLocation>
        <location evidence="1">Cytoplasm</location>
    </subcellularLocation>
</comment>
<comment type="PTM">
    <text evidence="1">Methylated by PrmC. Methylation increases the termination efficiency of RF1.</text>
</comment>
<comment type="similarity">
    <text evidence="1">Belongs to the prokaryotic/mitochondrial release factor family.</text>
</comment>
<organism>
    <name type="scientific">Bacteroides fragilis (strain YCH46)</name>
    <dbReference type="NCBI Taxonomy" id="295405"/>
    <lineage>
        <taxon>Bacteria</taxon>
        <taxon>Pseudomonadati</taxon>
        <taxon>Bacteroidota</taxon>
        <taxon>Bacteroidia</taxon>
        <taxon>Bacteroidales</taxon>
        <taxon>Bacteroidaceae</taxon>
        <taxon>Bacteroides</taxon>
    </lineage>
</organism>
<gene>
    <name evidence="1" type="primary">prfA</name>
    <name type="ordered locus">BF0910</name>
</gene>
<sequence>MADNNSILEKLDGLVARFEEVSTLITDPAVIADQKRYVKLTKEYKELDDLMKARKEYMQLLANIEEAKDILSNESDADMREMAKEEMDNSQERLPVLEEEIKLLLVPADPQDGKNAILEIRGGTGGDEAAIFAGDLFRMYAKFCETKGWKMEVSSANEGAAGGYKEIICSVTGDNVYGTLKYESGVHRVQRVPATETQGRVHTSAASVAVLPEAEEFDVVINEGEIKWDTFRSGGAGGQNVNKVESGVRLRYIWKNPNTGVAEEILIECTETRDQPKNKERALARLRTFIYDKEHQKYIDDIASKRKTMVSTGDRSAKIRTYNYPQGRITDHRINYTIYNLAAFMDGDIQECIDKLTVAENAERLKESEL</sequence>